<comment type="function">
    <text evidence="1">NDH-1 shuttles electrons from NADH, via FMN and iron-sulfur (Fe-S) centers, to quinones in the respiratory chain. The immediate electron acceptor for the enzyme in this species is believed to be ubiquinone. Couples the redox reaction to proton translocation (for every two electrons transferred, four hydrogen ions are translocated across the cytoplasmic membrane), and thus conserves the redox energy in a proton gradient.</text>
</comment>
<comment type="catalytic activity">
    <reaction evidence="1">
        <text>a quinone + NADH + 5 H(+)(in) = a quinol + NAD(+) + 4 H(+)(out)</text>
        <dbReference type="Rhea" id="RHEA:57888"/>
        <dbReference type="ChEBI" id="CHEBI:15378"/>
        <dbReference type="ChEBI" id="CHEBI:24646"/>
        <dbReference type="ChEBI" id="CHEBI:57540"/>
        <dbReference type="ChEBI" id="CHEBI:57945"/>
        <dbReference type="ChEBI" id="CHEBI:132124"/>
    </reaction>
</comment>
<comment type="subunit">
    <text evidence="1">NDH-1 is composed of 14 different subunits. Subunits NuoA, H, J, K, L, M, N constitute the membrane sector of the complex.</text>
</comment>
<comment type="subcellular location">
    <subcellularLocation>
        <location evidence="1">Cell inner membrane</location>
        <topology evidence="1">Multi-pass membrane protein</topology>
    </subcellularLocation>
</comment>
<comment type="similarity">
    <text evidence="1">Belongs to the complex I subunit 2 family.</text>
</comment>
<dbReference type="EC" id="7.1.1.-" evidence="1"/>
<dbReference type="EMBL" id="AE017282">
    <property type="protein sequence ID" value="AAU92595.1"/>
    <property type="molecule type" value="Genomic_DNA"/>
</dbReference>
<dbReference type="RefSeq" id="WP_010960627.1">
    <property type="nucleotide sequence ID" value="NC_002977.6"/>
</dbReference>
<dbReference type="SMR" id="Q608Y9"/>
<dbReference type="STRING" id="243233.MCA1347"/>
<dbReference type="GeneID" id="88223625"/>
<dbReference type="KEGG" id="mca:MCA1347"/>
<dbReference type="eggNOG" id="COG1007">
    <property type="taxonomic scope" value="Bacteria"/>
</dbReference>
<dbReference type="HOGENOM" id="CLU_007100_1_5_6"/>
<dbReference type="Proteomes" id="UP000006821">
    <property type="component" value="Chromosome"/>
</dbReference>
<dbReference type="GO" id="GO:0005886">
    <property type="term" value="C:plasma membrane"/>
    <property type="evidence" value="ECO:0007669"/>
    <property type="project" value="UniProtKB-SubCell"/>
</dbReference>
<dbReference type="GO" id="GO:0008137">
    <property type="term" value="F:NADH dehydrogenase (ubiquinone) activity"/>
    <property type="evidence" value="ECO:0007669"/>
    <property type="project" value="InterPro"/>
</dbReference>
<dbReference type="GO" id="GO:0050136">
    <property type="term" value="F:NADH:ubiquinone reductase (non-electrogenic) activity"/>
    <property type="evidence" value="ECO:0007669"/>
    <property type="project" value="UniProtKB-UniRule"/>
</dbReference>
<dbReference type="GO" id="GO:0048038">
    <property type="term" value="F:quinone binding"/>
    <property type="evidence" value="ECO:0007669"/>
    <property type="project" value="UniProtKB-KW"/>
</dbReference>
<dbReference type="GO" id="GO:0042773">
    <property type="term" value="P:ATP synthesis coupled electron transport"/>
    <property type="evidence" value="ECO:0007669"/>
    <property type="project" value="InterPro"/>
</dbReference>
<dbReference type="GO" id="GO:0022904">
    <property type="term" value="P:respiratory electron transport chain"/>
    <property type="evidence" value="ECO:0000250"/>
    <property type="project" value="GO_Central"/>
</dbReference>
<dbReference type="HAMAP" id="MF_00445">
    <property type="entry name" value="NDH1_NuoN_1"/>
    <property type="match status" value="1"/>
</dbReference>
<dbReference type="InterPro" id="IPR010096">
    <property type="entry name" value="NADH-Q_OxRdtase_suN/2"/>
</dbReference>
<dbReference type="InterPro" id="IPR001750">
    <property type="entry name" value="ND/Mrp_TM"/>
</dbReference>
<dbReference type="NCBIfam" id="TIGR01770">
    <property type="entry name" value="NDH_I_N"/>
    <property type="match status" value="1"/>
</dbReference>
<dbReference type="PANTHER" id="PTHR22773">
    <property type="entry name" value="NADH DEHYDROGENASE"/>
    <property type="match status" value="1"/>
</dbReference>
<dbReference type="Pfam" id="PF00361">
    <property type="entry name" value="Proton_antipo_M"/>
    <property type="match status" value="1"/>
</dbReference>
<organism>
    <name type="scientific">Methylococcus capsulatus (strain ATCC 33009 / NCIMB 11132 / Bath)</name>
    <dbReference type="NCBI Taxonomy" id="243233"/>
    <lineage>
        <taxon>Bacteria</taxon>
        <taxon>Pseudomonadati</taxon>
        <taxon>Pseudomonadota</taxon>
        <taxon>Gammaproteobacteria</taxon>
        <taxon>Methylococcales</taxon>
        <taxon>Methylococcaceae</taxon>
        <taxon>Methylococcus</taxon>
    </lineage>
</organism>
<name>NUON_METCA</name>
<gene>
    <name evidence="1" type="primary">nuoN</name>
    <name type="ordered locus">MCA1347</name>
</gene>
<proteinExistence type="inferred from homology"/>
<accession>Q608Y9</accession>
<sequence length="493" mass="52350">MTTDALTALLPFIVLSAAAVAVMLAIAIRRSFRLVFWLTVGGLLAGLSTLPHASSVAPLQVTDLLRVDAYGLFFHALFLLAALVVALLCLAYFRRRENENEEIFVLLLTSTLGALLLVSSAHLAMFFLGLEVLTISLFPMIAYSVRASRPLEAGIKYLMLSGLASSFLMFGMAMVYGDLGVLSFEQIGAHGAELEQKPLALAGLFLILAAIGFKLSLVPFHLWTPDVYQGAPTPVTAFLATVSKASVFALLLRFFTAAHAERSETFLCVLGLLAVVSILAGNLLALLQVSLKRLLAYSSIAHMGYLLTGFVAAGLLRRDLQTETIAFYLAAYTVTSLTAFGAISALSDDDRESDRLSDYAGLFWRSPWLAAVLTLSLLSLAGIPLTVGFVGKFYVFAVGVQAETWPLVATVVIGSGIGIYYYLRVVLTMIQPAGVGQRVTLHPAAGTALAAAALVILAAGLFPQPLIDAAANVPQPPPTADSPQRLTATGGLP</sequence>
<protein>
    <recommendedName>
        <fullName evidence="1">NADH-quinone oxidoreductase subunit N</fullName>
        <ecNumber evidence="1">7.1.1.-</ecNumber>
    </recommendedName>
    <alternativeName>
        <fullName evidence="1">NADH dehydrogenase I subunit N</fullName>
    </alternativeName>
    <alternativeName>
        <fullName evidence="1">NDH-1 subunit N</fullName>
    </alternativeName>
</protein>
<keyword id="KW-0997">Cell inner membrane</keyword>
<keyword id="KW-1003">Cell membrane</keyword>
<keyword id="KW-0472">Membrane</keyword>
<keyword id="KW-0520">NAD</keyword>
<keyword id="KW-0874">Quinone</keyword>
<keyword id="KW-1185">Reference proteome</keyword>
<keyword id="KW-1278">Translocase</keyword>
<keyword id="KW-0812">Transmembrane</keyword>
<keyword id="KW-1133">Transmembrane helix</keyword>
<keyword id="KW-0813">Transport</keyword>
<keyword id="KW-0830">Ubiquinone</keyword>
<feature type="chain" id="PRO_0000391179" description="NADH-quinone oxidoreductase subunit N">
    <location>
        <begin position="1"/>
        <end position="493"/>
    </location>
</feature>
<feature type="transmembrane region" description="Helical" evidence="1">
    <location>
        <begin position="8"/>
        <end position="28"/>
    </location>
</feature>
<feature type="transmembrane region" description="Helical" evidence="1">
    <location>
        <begin position="34"/>
        <end position="54"/>
    </location>
</feature>
<feature type="transmembrane region" description="Helical" evidence="1">
    <location>
        <begin position="71"/>
        <end position="91"/>
    </location>
</feature>
<feature type="transmembrane region" description="Helical" evidence="1">
    <location>
        <begin position="102"/>
        <end position="122"/>
    </location>
</feature>
<feature type="transmembrane region" description="Helical" evidence="1">
    <location>
        <begin position="123"/>
        <end position="143"/>
    </location>
</feature>
<feature type="transmembrane region" description="Helical" evidence="1">
    <location>
        <begin position="157"/>
        <end position="177"/>
    </location>
</feature>
<feature type="transmembrane region" description="Helical" evidence="1">
    <location>
        <begin position="200"/>
        <end position="220"/>
    </location>
</feature>
<feature type="transmembrane region" description="Helical" evidence="1">
    <location>
        <begin position="232"/>
        <end position="252"/>
    </location>
</feature>
<feature type="transmembrane region" description="Helical" evidence="1">
    <location>
        <begin position="266"/>
        <end position="286"/>
    </location>
</feature>
<feature type="transmembrane region" description="Helical" evidence="1">
    <location>
        <begin position="294"/>
        <end position="314"/>
    </location>
</feature>
<feature type="transmembrane region" description="Helical" evidence="1">
    <location>
        <begin position="325"/>
        <end position="345"/>
    </location>
</feature>
<feature type="transmembrane region" description="Helical" evidence="1">
    <location>
        <begin position="370"/>
        <end position="390"/>
    </location>
</feature>
<feature type="transmembrane region" description="Helical" evidence="1">
    <location>
        <begin position="405"/>
        <end position="427"/>
    </location>
</feature>
<feature type="transmembrane region" description="Helical" evidence="1">
    <location>
        <begin position="443"/>
        <end position="463"/>
    </location>
</feature>
<feature type="region of interest" description="Disordered" evidence="2">
    <location>
        <begin position="473"/>
        <end position="493"/>
    </location>
</feature>
<reference key="1">
    <citation type="journal article" date="2004" name="PLoS Biol.">
        <title>Genomic insights into methanotrophy: the complete genome sequence of Methylococcus capsulatus (Bath).</title>
        <authorList>
            <person name="Ward N.L."/>
            <person name="Larsen O."/>
            <person name="Sakwa J."/>
            <person name="Bruseth L."/>
            <person name="Khouri H.M."/>
            <person name="Durkin A.S."/>
            <person name="Dimitrov G."/>
            <person name="Jiang L."/>
            <person name="Scanlan D."/>
            <person name="Kang K.H."/>
            <person name="Lewis M.R."/>
            <person name="Nelson K.E."/>
            <person name="Methe B.A."/>
            <person name="Wu M."/>
            <person name="Heidelberg J.F."/>
            <person name="Paulsen I.T."/>
            <person name="Fouts D.E."/>
            <person name="Ravel J."/>
            <person name="Tettelin H."/>
            <person name="Ren Q."/>
            <person name="Read T.D."/>
            <person name="DeBoy R.T."/>
            <person name="Seshadri R."/>
            <person name="Salzberg S.L."/>
            <person name="Jensen H.B."/>
            <person name="Birkeland N.K."/>
            <person name="Nelson W.C."/>
            <person name="Dodson R.J."/>
            <person name="Grindhaug S.H."/>
            <person name="Holt I.E."/>
            <person name="Eidhammer I."/>
            <person name="Jonasen I."/>
            <person name="Vanaken S."/>
            <person name="Utterback T.R."/>
            <person name="Feldblyum T.V."/>
            <person name="Fraser C.M."/>
            <person name="Lillehaug J.R."/>
            <person name="Eisen J.A."/>
        </authorList>
    </citation>
    <scope>NUCLEOTIDE SEQUENCE [LARGE SCALE GENOMIC DNA]</scope>
    <source>
        <strain>ATCC 33009 / NCIMB 11132 / Bath</strain>
    </source>
</reference>
<evidence type="ECO:0000255" key="1">
    <source>
        <dbReference type="HAMAP-Rule" id="MF_00445"/>
    </source>
</evidence>
<evidence type="ECO:0000256" key="2">
    <source>
        <dbReference type="SAM" id="MobiDB-lite"/>
    </source>
</evidence>